<gene>
    <name type="ORF">IIV3-089L</name>
</gene>
<sequence length="98" mass="11207">MPRDKKLVHRATSDVEDEDNDQREEEWSDNDQPSTKDDTAAPTETGLEPSSASNGHSQPAIVAALEQERRQHLESIILKRTLYLQQQRQKQQEGTNRP</sequence>
<protein>
    <recommendedName>
        <fullName>Uncharacterized protein 089L</fullName>
    </recommendedName>
</protein>
<proteinExistence type="predicted"/>
<name>089L_IIV3</name>
<evidence type="ECO:0000256" key="1">
    <source>
        <dbReference type="SAM" id="MobiDB-lite"/>
    </source>
</evidence>
<accession>Q196X1</accession>
<organismHost>
    <name type="scientific">Aedes vexans</name>
    <name type="common">Inland floodwater mosquito</name>
    <name type="synonym">Culex vexans</name>
    <dbReference type="NCBI Taxonomy" id="7163"/>
</organismHost>
<organismHost>
    <name type="scientific">Culex territans</name>
    <dbReference type="NCBI Taxonomy" id="42431"/>
</organismHost>
<organismHost>
    <name type="scientific">Culiseta annulata</name>
    <dbReference type="NCBI Taxonomy" id="332058"/>
</organismHost>
<organismHost>
    <name type="scientific">Ochlerotatus sollicitans</name>
    <name type="common">eastern saltmarsh mosquito</name>
    <dbReference type="NCBI Taxonomy" id="310513"/>
</organismHost>
<organismHost>
    <name type="scientific">Ochlerotatus taeniorhynchus</name>
    <name type="common">Black salt marsh mosquito</name>
    <name type="synonym">Aedes taeniorhynchus</name>
    <dbReference type="NCBI Taxonomy" id="329105"/>
</organismHost>
<organismHost>
    <name type="scientific">Psorophora ferox</name>
    <dbReference type="NCBI Taxonomy" id="7183"/>
</organismHost>
<reference key="1">
    <citation type="journal article" date="2006" name="J. Virol.">
        <title>Genome of invertebrate iridescent virus type 3 (mosquito iridescent virus).</title>
        <authorList>
            <person name="Delhon G."/>
            <person name="Tulman E.R."/>
            <person name="Afonso C.L."/>
            <person name="Lu Z."/>
            <person name="Becnel J.J."/>
            <person name="Moser B.A."/>
            <person name="Kutish G.F."/>
            <person name="Rock D.L."/>
        </authorList>
    </citation>
    <scope>NUCLEOTIDE SEQUENCE [LARGE SCALE GENOMIC DNA]</scope>
</reference>
<feature type="chain" id="PRO_0000377808" description="Uncharacterized protein 089L">
    <location>
        <begin position="1"/>
        <end position="98"/>
    </location>
</feature>
<feature type="region of interest" description="Disordered" evidence="1">
    <location>
        <begin position="1"/>
        <end position="63"/>
    </location>
</feature>
<feature type="compositionally biased region" description="Acidic residues" evidence="1">
    <location>
        <begin position="14"/>
        <end position="29"/>
    </location>
</feature>
<feature type="compositionally biased region" description="Polar residues" evidence="1">
    <location>
        <begin position="48"/>
        <end position="57"/>
    </location>
</feature>
<dbReference type="EMBL" id="DQ643392">
    <property type="protein sequence ID" value="ABF82119.1"/>
    <property type="molecule type" value="Genomic_DNA"/>
</dbReference>
<dbReference type="RefSeq" id="YP_654661.1">
    <property type="nucleotide sequence ID" value="NC_008187.1"/>
</dbReference>
<dbReference type="SMR" id="Q196X1"/>
<dbReference type="KEGG" id="vg:4156233"/>
<dbReference type="Proteomes" id="UP000001358">
    <property type="component" value="Genome"/>
</dbReference>
<keyword id="KW-1185">Reference proteome</keyword>
<organism>
    <name type="scientific">Invertebrate iridescent virus 3</name>
    <name type="common">IIV-3</name>
    <name type="synonym">Mosquito iridescent virus</name>
    <dbReference type="NCBI Taxonomy" id="345201"/>
    <lineage>
        <taxon>Viruses</taxon>
        <taxon>Varidnaviria</taxon>
        <taxon>Bamfordvirae</taxon>
        <taxon>Nucleocytoviricota</taxon>
        <taxon>Megaviricetes</taxon>
        <taxon>Pimascovirales</taxon>
        <taxon>Iridoviridae</taxon>
        <taxon>Betairidovirinae</taxon>
        <taxon>Chloriridovirus</taxon>
    </lineage>
</organism>